<name>TGL5_YEAST</name>
<sequence>MSNTLPVTEFLLSKYYELSNTPATDSSSLFKWLYHKTLSRKQLLISDLSSQKKHAISYDQWNDIASRLDDLTGLSEWKTIDESSLYNYKLLQDLTIRMRHLRTTHDYHRLLYLIRTKWVRNLGNMNNVNLYRHSHTGTKQIIHDYLEESQAVLTALIHQSNMNDHYLLGILQQTRRNIGRTALVLSGGSTFGLFHIGVLAALFESDLMPKVISGSSAGAIVASIFCVHTTQEIPSLLTNVLNMEFNIFNDDNSKSPNENLLIKISRFCQNGTWFNNQPLINTMLSFLGNLTFREAYNKTGKILNITVSPASIYEQPKLLNNLTAPNVLIWSAVCASCSLPGVFPSTPLFEKDPHTGKIKEWGATNLHLSNMKFMDGSVDNDMPISRLSEMFNVDHIIACQVNIHVFPLLKFSNTCVGGEIEKEITARFRNQVTKIFKFFSDETIHFLDILKELEFHPYLMTKLKHLFLQQYSGNVTILPDLSMVGQFHEVLKNPSQLFLLHQTTLGARATWPKISMIQNNCGQEFALDKAITFLKEKIIISSSIKNPLQFYQPRFSEQIKSLSIMDADLPGVDLEESSSNSLSIIKSPNKTAAPGRFPLQPLPSPSSTFNKRKMDMLSPSPSPSTSPQRSKSSFTQQGTRQKANSLSFAIGASSLRLKKSPLKVPSRPQFKKRSSYYNQNMSAEMRKNRKKSGTISSYDVQTNSEDFPIPAIENGSFDNTLFNPSRFPMDAMSAATNDNFMNNSDIFQN</sequence>
<protein>
    <recommendedName>
        <fullName>Triacylglycerol lipase 5</fullName>
        <shortName>TAG lipase 5</shortName>
        <shortName>TG lipase 5</shortName>
        <ecNumber evidence="6">3.1.1.3</ecNumber>
    </recommendedName>
    <alternativeName>
        <fullName>Lipase 5</fullName>
    </alternativeName>
</protein>
<proteinExistence type="evidence at protein level"/>
<keyword id="KW-0325">Glycoprotein</keyword>
<keyword id="KW-0378">Hydrolase</keyword>
<keyword id="KW-0442">Lipid degradation</keyword>
<keyword id="KW-0551">Lipid droplet</keyword>
<keyword id="KW-0443">Lipid metabolism</keyword>
<keyword id="KW-0597">Phosphoprotein</keyword>
<keyword id="KW-1185">Reference proteome</keyword>
<keyword id="KW-0749">Sporulation</keyword>
<comment type="function">
    <text evidence="6 7">Lipid particle-localized triacylglycerol (TAG) lipase. The lipid droplet/particle is a lipid storage compartment which serves as a depot of energy and building blocks for membrane lipid biosynthesis. Involved in the mobilization of the non-polar storage lipids triacylglycerols (TAGs) from lipid particles by hydrolysis of TAGs, releasing and supplying specific fatty acids to the appropriate metabolic pathways (PubMed:16135509). Also catalyzes the acylation of lysophosphatidic acid (LPA) (PubMed:20016004).</text>
</comment>
<comment type="catalytic activity">
    <reaction evidence="6">
        <text>a triacylglycerol + H2O = a diacylglycerol + a fatty acid + H(+)</text>
        <dbReference type="Rhea" id="RHEA:12044"/>
        <dbReference type="ChEBI" id="CHEBI:15377"/>
        <dbReference type="ChEBI" id="CHEBI:15378"/>
        <dbReference type="ChEBI" id="CHEBI:17855"/>
        <dbReference type="ChEBI" id="CHEBI:18035"/>
        <dbReference type="ChEBI" id="CHEBI:28868"/>
        <dbReference type="EC" id="3.1.1.3"/>
    </reaction>
</comment>
<comment type="catalytic activity">
    <reaction evidence="7">
        <text>1-(9Z-octadecenoyl)-sn-glycero-3-phosphate + (9Z)-octadecenoyl-CoA = 1,2-di-(9Z-octadecenoyl)-sn-glycero-3-phosphate + CoA</text>
        <dbReference type="Rhea" id="RHEA:37131"/>
        <dbReference type="ChEBI" id="CHEBI:57287"/>
        <dbReference type="ChEBI" id="CHEBI:57387"/>
        <dbReference type="ChEBI" id="CHEBI:74544"/>
        <dbReference type="ChEBI" id="CHEBI:74546"/>
    </reaction>
    <physiologicalReaction direction="left-to-right" evidence="11">
        <dbReference type="Rhea" id="RHEA:37132"/>
    </physiologicalReaction>
</comment>
<comment type="catalytic activity">
    <reaction evidence="7">
        <text>1-(9Z-octadecenoyl)-sn-glycero-3-phosphate + hexadecanoyl-CoA = 1-hexadecanoyl-2-(9Z-octadecenoyl)-sn-glycero-3-phosphate + CoA</text>
        <dbReference type="Rhea" id="RHEA:42592"/>
        <dbReference type="ChEBI" id="CHEBI:57287"/>
        <dbReference type="ChEBI" id="CHEBI:57379"/>
        <dbReference type="ChEBI" id="CHEBI:64839"/>
        <dbReference type="ChEBI" id="CHEBI:74544"/>
    </reaction>
    <physiologicalReaction direction="left-to-right" evidence="11">
        <dbReference type="Rhea" id="RHEA:42593"/>
    </physiologicalReaction>
</comment>
<comment type="activity regulation">
    <text evidence="10">Loses its lipolytic activity in cells lacking nonpolar lipids, but retains its side activity as lysophospholipid acyltransferase.</text>
</comment>
<comment type="biophysicochemical properties">
    <kinetics>
        <KM evidence="7">18.7 uM for 1-(9Z-octadecenoyl)-sn-glycero-3-phosphate</KM>
        <KM evidence="7">29.3 uM for (9Z)-octadecenoyl-CoA</KM>
        <Vmax evidence="7">28.8 nmol/min/mg enzyme towards 1-(9Z-octadecenoyl)-sn-glycero-3-phosphate</Vmax>
        <Vmax evidence="7">38.1 nmol/min/mg enzyme towards (9Z)-octadecenoyl-CoA</Vmax>
    </kinetics>
</comment>
<comment type="subcellular location">
    <subcellularLocation>
        <location evidence="4 6 8 9 10">Lipid droplet</location>
    </subcellularLocation>
    <text evidence="10">Partially retained in the endoplasmic reticulum in cells lacking triacylglycerols.</text>
</comment>
<comment type="miscellaneous">
    <text evidence="5">Present with 358 molecules/cell in log phase SD medium.</text>
</comment>
<evidence type="ECO:0000255" key="1"/>
<evidence type="ECO:0000255" key="2">
    <source>
        <dbReference type="PROSITE-ProRule" id="PRU01161"/>
    </source>
</evidence>
<evidence type="ECO:0000256" key="3">
    <source>
        <dbReference type="SAM" id="MobiDB-lite"/>
    </source>
</evidence>
<evidence type="ECO:0000269" key="4">
    <source>
    </source>
</evidence>
<evidence type="ECO:0000269" key="5">
    <source>
    </source>
</evidence>
<evidence type="ECO:0000269" key="6">
    <source>
    </source>
</evidence>
<evidence type="ECO:0000269" key="7">
    <source>
    </source>
</evidence>
<evidence type="ECO:0000269" key="8">
    <source>
    </source>
</evidence>
<evidence type="ECO:0000269" key="9">
    <source>
    </source>
</evidence>
<evidence type="ECO:0000269" key="10">
    <source>
    </source>
</evidence>
<evidence type="ECO:0000305" key="11">
    <source>
    </source>
</evidence>
<evidence type="ECO:0000305" key="12">
    <source ref="12"/>
</evidence>
<evidence type="ECO:0007744" key="13">
    <source>
    </source>
</evidence>
<gene>
    <name type="primary">TGL5</name>
    <name type="synonym">STC2</name>
    <name type="ordered locus">YOR081C</name>
    <name type="ORF">YOR29-32</name>
    <name type="ORF">YOR2964C</name>
</gene>
<organism>
    <name type="scientific">Saccharomyces cerevisiae (strain ATCC 204508 / S288c)</name>
    <name type="common">Baker's yeast</name>
    <dbReference type="NCBI Taxonomy" id="559292"/>
    <lineage>
        <taxon>Eukaryota</taxon>
        <taxon>Fungi</taxon>
        <taxon>Dikarya</taxon>
        <taxon>Ascomycota</taxon>
        <taxon>Saccharomycotina</taxon>
        <taxon>Saccharomycetes</taxon>
        <taxon>Saccharomycetales</taxon>
        <taxon>Saccharomycetaceae</taxon>
        <taxon>Saccharomyces</taxon>
    </lineage>
</organism>
<feature type="chain" id="PRO_0000270918" description="Triacylglycerol lipase 5">
    <location>
        <begin position="1"/>
        <end position="749"/>
    </location>
</feature>
<feature type="domain" description="PNPLA" evidence="2">
    <location>
        <begin position="183"/>
        <end position="388"/>
    </location>
</feature>
<feature type="region of interest" description="Disordered" evidence="3">
    <location>
        <begin position="585"/>
        <end position="643"/>
    </location>
</feature>
<feature type="short sequence motif" description="HXXXXD acyltransferase motif" evidence="11 12">
    <location>
        <begin position="54"/>
        <end position="59"/>
    </location>
</feature>
<feature type="short sequence motif" description="GXSXG" evidence="2">
    <location>
        <begin position="214"/>
        <end position="218"/>
    </location>
</feature>
<feature type="compositionally biased region" description="Low complexity" evidence="3">
    <location>
        <begin position="623"/>
        <end position="633"/>
    </location>
</feature>
<feature type="compositionally biased region" description="Polar residues" evidence="3">
    <location>
        <begin position="634"/>
        <end position="643"/>
    </location>
</feature>
<feature type="active site" description="Nucleophile" evidence="2">
    <location>
        <position position="216"/>
    </location>
</feature>
<feature type="active site" description="Proton acceptor" evidence="2">
    <location>
        <position position="375"/>
    </location>
</feature>
<feature type="modified residue" description="Phosphoserine" evidence="13">
    <location>
        <position position="645"/>
    </location>
</feature>
<feature type="glycosylation site" description="N-linked (GlcNAc...) asparagine" evidence="1">
    <location>
        <position position="270"/>
    </location>
</feature>
<feature type="glycosylation site" description="N-linked (GlcNAc...) asparagine" evidence="1">
    <location>
        <position position="289"/>
    </location>
</feature>
<feature type="glycosylation site" description="N-linked (GlcNAc...) asparagine" evidence="1">
    <location>
        <position position="297"/>
    </location>
</feature>
<feature type="glycosylation site" description="N-linked (GlcNAc...) asparagine" evidence="1">
    <location>
        <position position="304"/>
    </location>
</feature>
<feature type="glycosylation site" description="N-linked (GlcNAc...) asparagine" evidence="1">
    <location>
        <position position="321"/>
    </location>
</feature>
<feature type="glycosylation site" description="N-linked (GlcNAc...) asparagine" evidence="1">
    <location>
        <position position="474"/>
    </location>
</feature>
<feature type="glycosylation site" description="N-linked (GlcNAc...) asparagine" evidence="1">
    <location>
        <position position="589"/>
    </location>
</feature>
<feature type="glycosylation site" description="N-linked (GlcNAc...) asparagine" evidence="1">
    <location>
        <position position="680"/>
    </location>
</feature>
<feature type="glycosylation site" description="N-linked (GlcNAc...) asparagine" evidence="1">
    <location>
        <position position="714"/>
    </location>
</feature>
<feature type="glycosylation site" description="N-linked (GlcNAc...) asparagine" evidence="1">
    <location>
        <position position="742"/>
    </location>
</feature>
<accession>Q12043</accession>
<accession>D6W2E4</accession>
<accession>Q7LH13</accession>
<reference key="1">
    <citation type="journal article" date="1997" name="Yeast">
        <title>DNA sequencing and analysis of 130 kb from yeast chromosome XV.</title>
        <authorList>
            <person name="Voss H."/>
            <person name="Benes V."/>
            <person name="Andrade M.A."/>
            <person name="Valencia A."/>
            <person name="Rechmann S."/>
            <person name="Teodoru C."/>
            <person name="Schwager C."/>
            <person name="Paces V."/>
            <person name="Sander C."/>
            <person name="Ansorge W."/>
        </authorList>
    </citation>
    <scope>NUCLEOTIDE SEQUENCE [GENOMIC DNA]</scope>
</reference>
<reference key="2">
    <citation type="journal article" date="1997" name="Nature">
        <title>The nucleotide sequence of Saccharomyces cerevisiae chromosome XV.</title>
        <authorList>
            <person name="Dujon B."/>
            <person name="Albermann K."/>
            <person name="Aldea M."/>
            <person name="Alexandraki D."/>
            <person name="Ansorge W."/>
            <person name="Arino J."/>
            <person name="Benes V."/>
            <person name="Bohn C."/>
            <person name="Bolotin-Fukuhara M."/>
            <person name="Bordonne R."/>
            <person name="Boyer J."/>
            <person name="Camasses A."/>
            <person name="Casamayor A."/>
            <person name="Casas C."/>
            <person name="Cheret G."/>
            <person name="Cziepluch C."/>
            <person name="Daignan-Fornier B."/>
            <person name="Dang V.-D."/>
            <person name="de Haan M."/>
            <person name="Delius H."/>
            <person name="Durand P."/>
            <person name="Fairhead C."/>
            <person name="Feldmann H."/>
            <person name="Gaillon L."/>
            <person name="Galisson F."/>
            <person name="Gamo F.-J."/>
            <person name="Gancedo C."/>
            <person name="Goffeau A."/>
            <person name="Goulding S.E."/>
            <person name="Grivell L.A."/>
            <person name="Habbig B."/>
            <person name="Hand N.J."/>
            <person name="Hani J."/>
            <person name="Hattenhorst U."/>
            <person name="Hebling U."/>
            <person name="Hernando Y."/>
            <person name="Herrero E."/>
            <person name="Heumann K."/>
            <person name="Hiesel R."/>
            <person name="Hilger F."/>
            <person name="Hofmann B."/>
            <person name="Hollenberg C.P."/>
            <person name="Hughes B."/>
            <person name="Jauniaux J.-C."/>
            <person name="Kalogeropoulos A."/>
            <person name="Katsoulou C."/>
            <person name="Kordes E."/>
            <person name="Lafuente M.J."/>
            <person name="Landt O."/>
            <person name="Louis E.J."/>
            <person name="Maarse A.C."/>
            <person name="Madania A."/>
            <person name="Mannhaupt G."/>
            <person name="Marck C."/>
            <person name="Martin R.P."/>
            <person name="Mewes H.-W."/>
            <person name="Michaux G."/>
            <person name="Paces V."/>
            <person name="Parle-McDermott A.G."/>
            <person name="Pearson B.M."/>
            <person name="Perrin A."/>
            <person name="Pettersson B."/>
            <person name="Poch O."/>
            <person name="Pohl T.M."/>
            <person name="Poirey R."/>
            <person name="Portetelle D."/>
            <person name="Pujol A."/>
            <person name="Purnelle B."/>
            <person name="Ramezani Rad M."/>
            <person name="Rechmann S."/>
            <person name="Schwager C."/>
            <person name="Schweizer M."/>
            <person name="Sor F."/>
            <person name="Sterky F."/>
            <person name="Tarassov I.A."/>
            <person name="Teodoru C."/>
            <person name="Tettelin H."/>
            <person name="Thierry A."/>
            <person name="Tobiasch E."/>
            <person name="Tzermia M."/>
            <person name="Uhlen M."/>
            <person name="Unseld M."/>
            <person name="Valens M."/>
            <person name="Vandenbol M."/>
            <person name="Vetter I."/>
            <person name="Vlcek C."/>
            <person name="Voet M."/>
            <person name="Volckaert G."/>
            <person name="Voss H."/>
            <person name="Wambutt R."/>
            <person name="Wedler H."/>
            <person name="Wiemann S."/>
            <person name="Winsor B."/>
            <person name="Wolfe K.H."/>
            <person name="Zollner A."/>
            <person name="Zumstein E."/>
            <person name="Kleine K."/>
        </authorList>
    </citation>
    <scope>NUCLEOTIDE SEQUENCE [LARGE SCALE GENOMIC DNA]</scope>
    <source>
        <strain>ATCC 204508 / S288c</strain>
    </source>
</reference>
<reference key="3">
    <citation type="journal article" date="2014" name="G3 (Bethesda)">
        <title>The reference genome sequence of Saccharomyces cerevisiae: Then and now.</title>
        <authorList>
            <person name="Engel S.R."/>
            <person name="Dietrich F.S."/>
            <person name="Fisk D.G."/>
            <person name="Binkley G."/>
            <person name="Balakrishnan R."/>
            <person name="Costanzo M.C."/>
            <person name="Dwight S.S."/>
            <person name="Hitz B.C."/>
            <person name="Karra K."/>
            <person name="Nash R.S."/>
            <person name="Weng S."/>
            <person name="Wong E.D."/>
            <person name="Lloyd P."/>
            <person name="Skrzypek M.S."/>
            <person name="Miyasato S.R."/>
            <person name="Simison M."/>
            <person name="Cherry J.M."/>
        </authorList>
    </citation>
    <scope>GENOME REANNOTATION</scope>
    <source>
        <strain>ATCC 204508 / S288c</strain>
    </source>
</reference>
<reference key="4">
    <citation type="journal article" date="1997" name="Yeast">
        <title>The sequence of a 54.7 kb fragment of yeast chromosome XV reveals the presence of two tRNAs and 24 new open reading frames.</title>
        <authorList>
            <person name="Valens M."/>
            <person name="Bohn C."/>
            <person name="Daignan-Fornier B."/>
            <person name="Dang V.-D."/>
            <person name="Bolotin-Fukuhara M."/>
        </authorList>
    </citation>
    <scope>NUCLEOTIDE SEQUENCE [GENOMIC DNA] OF 435-749</scope>
</reference>
<reference key="5">
    <citation type="journal article" date="2003" name="Nature">
        <title>Global analysis of protein localization in budding yeast.</title>
        <authorList>
            <person name="Huh W.-K."/>
            <person name="Falvo J.V."/>
            <person name="Gerke L.C."/>
            <person name="Carroll A.S."/>
            <person name="Howson R.W."/>
            <person name="Weissman J.S."/>
            <person name="O'Shea E.K."/>
        </authorList>
    </citation>
    <scope>SUBCELLULAR LOCATION [LARGE SCALE ANALYSIS]</scope>
</reference>
<reference key="6">
    <citation type="journal article" date="2003" name="Nature">
        <title>Global analysis of protein expression in yeast.</title>
        <authorList>
            <person name="Ghaemmaghami S."/>
            <person name="Huh W.-K."/>
            <person name="Bower K."/>
            <person name="Howson R.W."/>
            <person name="Belle A."/>
            <person name="Dephoure N."/>
            <person name="O'Shea E.K."/>
            <person name="Weissman J.S."/>
        </authorList>
    </citation>
    <scope>LEVEL OF PROTEIN EXPRESSION [LARGE SCALE ANALYSIS]</scope>
</reference>
<reference key="7">
    <citation type="journal article" date="2005" name="J. Biol. Chem.">
        <title>Tgl4p and Tgl5p, two triacylglycerol lipases of the yeast Saccharomyces cerevisiae are localized to lipid particles.</title>
        <authorList>
            <person name="Athenstaedt K."/>
            <person name="Daum G."/>
        </authorList>
    </citation>
    <scope>FUNCTION</scope>
    <scope>CATALYTIC ACTIVITY</scope>
    <scope>SUBCELLULAR LOCATION</scope>
</reference>
<reference key="8">
    <citation type="journal article" date="2008" name="Mol. Cell. Proteomics">
        <title>A multidimensional chromatography technology for in-depth phosphoproteome analysis.</title>
        <authorList>
            <person name="Albuquerque C.P."/>
            <person name="Smolka M.B."/>
            <person name="Payne S.H."/>
            <person name="Bafna V."/>
            <person name="Eng J."/>
            <person name="Zhou H."/>
        </authorList>
    </citation>
    <scope>IDENTIFICATION BY MASS SPECTROMETRY [LARGE SCALE ANALYSIS]</scope>
</reference>
<reference key="9">
    <citation type="journal article" date="2009" name="Science">
        <title>Global analysis of Cdk1 substrate phosphorylation sites provides insights into evolution.</title>
        <authorList>
            <person name="Holt L.J."/>
            <person name="Tuch B.B."/>
            <person name="Villen J."/>
            <person name="Johnson A.D."/>
            <person name="Gygi S.P."/>
            <person name="Morgan D.O."/>
        </authorList>
    </citation>
    <scope>PHOSPHORYLATION [LARGE SCALE ANALYSIS] AT SER-645</scope>
    <scope>IDENTIFICATION BY MASS SPECTROMETRY [LARGE SCALE ANALYSIS]</scope>
</reference>
<reference key="10">
    <citation type="journal article" date="2010" name="Mol. Biol. Cell">
        <title>Janus-faced enzymes yeast Tgl3p and Tgl5p catalyze lipase and acyltransferase reactions.</title>
        <authorList>
            <person name="Rajakumari S."/>
            <person name="Daum G."/>
        </authorList>
    </citation>
    <scope>FUNCTION</scope>
    <scope>CATALYTIC ACTIVITY</scope>
    <scope>BIOPHYSICOCHEMICAL PROPERTIES</scope>
</reference>
<reference key="11">
    <citation type="journal article" date="2011" name="Biochim. Biophys. Acta">
        <title>Lipid particles/droplets of the yeast Saccharomyces cerevisiae revisited: lipidome meets proteome.</title>
        <authorList>
            <person name="Grillitsch K."/>
            <person name="Connerth M."/>
            <person name="Kofeler H."/>
            <person name="Arrey T.N."/>
            <person name="Rietschel B."/>
            <person name="Wagner B."/>
            <person name="Karas M."/>
            <person name="Daum G."/>
        </authorList>
    </citation>
    <scope>SUBCELLULAR LOCATION</scope>
</reference>
<reference key="12">
    <citation type="journal article" date="2011" name="Front. Biol.">
        <title>Triacylglycerol lipases of the yeast.</title>
        <authorList>
            <person name="Grillitsch K."/>
            <person name="Daum G."/>
        </authorList>
    </citation>
    <scope>ACYLTRANSFERASE MOTIF</scope>
</reference>
<reference key="13">
    <citation type="journal article" date="2014" name="J. Lipid Res.">
        <title>High-confidence proteomic analysis of yeast lipid droplets identifies additional droplet proteins and reveals connections to dolichol synthesis and sterol acetylation.</title>
        <authorList>
            <person name="Currie E."/>
            <person name="Guo X."/>
            <person name="Christiano R."/>
            <person name="Chitraju C."/>
            <person name="Kory N."/>
            <person name="Harrison K."/>
            <person name="Haas J."/>
            <person name="Walther T.C."/>
            <person name="Farese R.V. Jr."/>
        </authorList>
    </citation>
    <scope>SUBCELLULAR LOCATION</scope>
</reference>
<reference key="14">
    <citation type="journal article" date="2016" name="Mol. Biol. Cell">
        <title>Regulation of the yeast triacylglycerol lipases Tgl4p and Tgl5p by the presence/absence of nonpolar lipids.</title>
        <authorList>
            <person name="Klein I."/>
            <person name="Klug L."/>
            <person name="Schmidt C."/>
            <person name="Zandl M."/>
            <person name="Korber M."/>
            <person name="Daum G."/>
            <person name="Athenstaedt K."/>
        </authorList>
    </citation>
    <scope>ACTIVITY REGULATION</scope>
</reference>
<dbReference type="EC" id="3.1.1.3" evidence="6"/>
<dbReference type="EMBL" id="X94335">
    <property type="protein sequence ID" value="CAA64004.1"/>
    <property type="molecule type" value="Genomic_DNA"/>
</dbReference>
<dbReference type="EMBL" id="Z74989">
    <property type="protein sequence ID" value="CAA99274.1"/>
    <property type="molecule type" value="Genomic_DNA"/>
</dbReference>
<dbReference type="EMBL" id="Z70678">
    <property type="protein sequence ID" value="CAA94566.1"/>
    <property type="molecule type" value="Genomic_DNA"/>
</dbReference>
<dbReference type="EMBL" id="BK006948">
    <property type="protein sequence ID" value="DAA10860.1"/>
    <property type="molecule type" value="Genomic_DNA"/>
</dbReference>
<dbReference type="PIR" id="S61643">
    <property type="entry name" value="S61643"/>
</dbReference>
<dbReference type="RefSeq" id="NP_014724.1">
    <property type="nucleotide sequence ID" value="NM_001183500.1"/>
</dbReference>
<dbReference type="BioGRID" id="34480">
    <property type="interactions" value="74"/>
</dbReference>
<dbReference type="DIP" id="DIP-6280N"/>
<dbReference type="FunCoup" id="Q12043">
    <property type="interactions" value="194"/>
</dbReference>
<dbReference type="IntAct" id="Q12043">
    <property type="interactions" value="11"/>
</dbReference>
<dbReference type="MINT" id="Q12043"/>
<dbReference type="STRING" id="4932.YOR081C"/>
<dbReference type="SwissLipids" id="SLP:000000054"/>
<dbReference type="SwissLipids" id="SLP:000000673"/>
<dbReference type="GlyCosmos" id="Q12043">
    <property type="glycosylation" value="10 sites, No reported glycans"/>
</dbReference>
<dbReference type="GlyGen" id="Q12043">
    <property type="glycosylation" value="10 sites"/>
</dbReference>
<dbReference type="iPTMnet" id="Q12043"/>
<dbReference type="PaxDb" id="4932-YOR081C"/>
<dbReference type="PeptideAtlas" id="Q12043"/>
<dbReference type="EnsemblFungi" id="YOR081C_mRNA">
    <property type="protein sequence ID" value="YOR081C"/>
    <property type="gene ID" value="YOR081C"/>
</dbReference>
<dbReference type="GeneID" id="854248"/>
<dbReference type="KEGG" id="sce:YOR081C"/>
<dbReference type="AGR" id="SGD:S000005607"/>
<dbReference type="SGD" id="S000005607">
    <property type="gene designation" value="TGL5"/>
</dbReference>
<dbReference type="VEuPathDB" id="FungiDB:YOR081C"/>
<dbReference type="eggNOG" id="KOG2214">
    <property type="taxonomic scope" value="Eukaryota"/>
</dbReference>
<dbReference type="GeneTree" id="ENSGT00940000176365"/>
<dbReference type="HOGENOM" id="CLU_009031_4_0_1"/>
<dbReference type="InParanoid" id="Q12043"/>
<dbReference type="OMA" id="RACLMGE"/>
<dbReference type="OrthoDB" id="10049244at2759"/>
<dbReference type="BioCyc" id="MetaCyc:G3O-33618-MONOMER"/>
<dbReference type="BioCyc" id="YEAST:G3O-33618-MONOMER"/>
<dbReference type="BioGRID-ORCS" id="854248">
    <property type="hits" value="0 hits in 10 CRISPR screens"/>
</dbReference>
<dbReference type="PRO" id="PR:Q12043"/>
<dbReference type="Proteomes" id="UP000002311">
    <property type="component" value="Chromosome XV"/>
</dbReference>
<dbReference type="RNAct" id="Q12043">
    <property type="molecule type" value="protein"/>
</dbReference>
<dbReference type="GO" id="GO:0005811">
    <property type="term" value="C:lipid droplet"/>
    <property type="evidence" value="ECO:0000314"/>
    <property type="project" value="SGD"/>
</dbReference>
<dbReference type="GO" id="GO:0042171">
    <property type="term" value="F:lysophosphatidic acid acyltransferase activity"/>
    <property type="evidence" value="ECO:0000314"/>
    <property type="project" value="SGD"/>
</dbReference>
<dbReference type="GO" id="GO:0004806">
    <property type="term" value="F:triacylglycerol lipase activity"/>
    <property type="evidence" value="ECO:0000314"/>
    <property type="project" value="SGD"/>
</dbReference>
<dbReference type="GO" id="GO:0016042">
    <property type="term" value="P:lipid catabolic process"/>
    <property type="evidence" value="ECO:0007669"/>
    <property type="project" value="UniProtKB-KW"/>
</dbReference>
<dbReference type="GO" id="GO:0030435">
    <property type="term" value="P:sporulation resulting in formation of a cellular spore"/>
    <property type="evidence" value="ECO:0007669"/>
    <property type="project" value="UniProtKB-KW"/>
</dbReference>
<dbReference type="GO" id="GO:0006642">
    <property type="term" value="P:triglyceride mobilization"/>
    <property type="evidence" value="ECO:0000314"/>
    <property type="project" value="SGD"/>
</dbReference>
<dbReference type="CDD" id="cd07230">
    <property type="entry name" value="Pat_TGL4-5_like"/>
    <property type="match status" value="1"/>
</dbReference>
<dbReference type="FunFam" id="3.40.1090.10:FF:000036">
    <property type="entry name" value="Patatin-like phospholipase domain-containing protein"/>
    <property type="match status" value="1"/>
</dbReference>
<dbReference type="Gene3D" id="3.40.1090.10">
    <property type="entry name" value="Cytosolic phospholipase A2 catalytic domain"/>
    <property type="match status" value="2"/>
</dbReference>
<dbReference type="InterPro" id="IPR016035">
    <property type="entry name" value="Acyl_Trfase/lysoPLipase"/>
</dbReference>
<dbReference type="InterPro" id="IPR050301">
    <property type="entry name" value="NTE"/>
</dbReference>
<dbReference type="InterPro" id="IPR002641">
    <property type="entry name" value="PNPLA_dom"/>
</dbReference>
<dbReference type="InterPro" id="IPR021771">
    <property type="entry name" value="Triacylglycerol_lipase_N"/>
</dbReference>
<dbReference type="PANTHER" id="PTHR14226">
    <property type="entry name" value="NEUROPATHY TARGET ESTERASE/SWISS CHEESE D.MELANOGASTER"/>
    <property type="match status" value="1"/>
</dbReference>
<dbReference type="PANTHER" id="PTHR14226:SF10">
    <property type="entry name" value="TRIACYLGLYCEROL LIPASE 4-RELATED"/>
    <property type="match status" value="1"/>
</dbReference>
<dbReference type="Pfam" id="PF11815">
    <property type="entry name" value="DUF3336"/>
    <property type="match status" value="1"/>
</dbReference>
<dbReference type="Pfam" id="PF01734">
    <property type="entry name" value="Patatin"/>
    <property type="match status" value="1"/>
</dbReference>
<dbReference type="SUPFAM" id="SSF52151">
    <property type="entry name" value="FabD/lysophospholipase-like"/>
    <property type="match status" value="1"/>
</dbReference>
<dbReference type="PROSITE" id="PS51635">
    <property type="entry name" value="PNPLA"/>
    <property type="match status" value="1"/>
</dbReference>